<protein>
    <recommendedName>
        <fullName evidence="4">U16-lycotoxin-Ls1a</fullName>
        <shortName evidence="4">U16-LCTX-Ls1a</shortName>
    </recommendedName>
    <alternativeName>
        <fullName>Toxin-like structure LSTX-P1</fullName>
    </alternativeName>
</protein>
<organism>
    <name type="scientific">Lycosa singoriensis</name>
    <name type="common">Wolf spider</name>
    <name type="synonym">Aranea singoriensis</name>
    <dbReference type="NCBI Taxonomy" id="434756"/>
    <lineage>
        <taxon>Eukaryota</taxon>
        <taxon>Metazoa</taxon>
        <taxon>Ecdysozoa</taxon>
        <taxon>Arthropoda</taxon>
        <taxon>Chelicerata</taxon>
        <taxon>Arachnida</taxon>
        <taxon>Araneae</taxon>
        <taxon>Araneomorphae</taxon>
        <taxon>Entelegynae</taxon>
        <taxon>Lycosoidea</taxon>
        <taxon>Lycosidae</taxon>
        <taxon>Lycosa</taxon>
    </lineage>
</organism>
<sequence>MSPKVQALLLLVGLITFLAVHAEEELSETVESERSCAKEYQWCDWNTRPCCDNISCICSWIGTNCECKKGIIRTIKDWYKGK</sequence>
<evidence type="ECO:0000250" key="1"/>
<evidence type="ECO:0000250" key="2">
    <source>
        <dbReference type="UniProtKB" id="P30288"/>
    </source>
</evidence>
<evidence type="ECO:0000255" key="3"/>
<evidence type="ECO:0000305" key="4"/>
<evidence type="ECO:0000305" key="5">
    <source>
    </source>
</evidence>
<keyword id="KW-1015">Disulfide bond</keyword>
<keyword id="KW-0960">Knottin</keyword>
<keyword id="KW-0964">Secreted</keyword>
<keyword id="KW-0732">Signal</keyword>
<keyword id="KW-0800">Toxin</keyword>
<name>TX24A_LYCSI</name>
<comment type="subcellular location">
    <subcellularLocation>
        <location evidence="5">Secreted</location>
    </subcellularLocation>
</comment>
<comment type="tissue specificity">
    <text evidence="5">Expressed by the venom gland.</text>
</comment>
<comment type="domain">
    <text evidence="2">The presence of a 'disulfide through disulfide knot' structurally defines this protein as a knottin.</text>
</comment>
<comment type="similarity">
    <text evidence="4">Belongs to the neurotoxin 02 (plectoxin) family. 04 (U16-lycotoxin) subfamily.</text>
</comment>
<feature type="signal peptide" evidence="3">
    <location>
        <begin position="1"/>
        <end position="22"/>
    </location>
</feature>
<feature type="propeptide" id="PRO_0000401895" evidence="1">
    <location>
        <begin position="23"/>
        <end position="34"/>
    </location>
</feature>
<feature type="chain" id="PRO_0000401896" description="U16-lycotoxin-Ls1a">
    <location>
        <begin position="35"/>
        <end position="82"/>
    </location>
</feature>
<feature type="disulfide bond" evidence="2">
    <location>
        <begin position="36"/>
        <end position="51"/>
    </location>
</feature>
<feature type="disulfide bond" evidence="2">
    <location>
        <begin position="43"/>
        <end position="56"/>
    </location>
</feature>
<feature type="disulfide bond" evidence="2">
    <location>
        <begin position="50"/>
        <end position="67"/>
    </location>
</feature>
<feature type="disulfide bond" evidence="2">
    <location>
        <begin position="58"/>
        <end position="65"/>
    </location>
</feature>
<proteinExistence type="inferred from homology"/>
<reference key="1">
    <citation type="journal article" date="2010" name="Zoology">
        <title>Transcriptome analysis of the venom glands of the Chinese wolf spider Lycosa singoriensis.</title>
        <authorList>
            <person name="Zhang Y."/>
            <person name="Chen J."/>
            <person name="Tang X."/>
            <person name="Wang F."/>
            <person name="Jiang L."/>
            <person name="Xiong X."/>
            <person name="Wang M."/>
            <person name="Rong M."/>
            <person name="Liu Z."/>
            <person name="Liang S."/>
        </authorList>
    </citation>
    <scope>NUCLEOTIDE SEQUENCE [LARGE SCALE MRNA]</scope>
    <source>
        <tissue>Venom gland</tissue>
    </source>
</reference>
<dbReference type="EMBL" id="EU926136">
    <property type="protein sequence ID" value="ACI41468.1"/>
    <property type="molecule type" value="mRNA"/>
</dbReference>
<dbReference type="EMBL" id="FM864140">
    <property type="protein sequence ID" value="CAS03737.1"/>
    <property type="molecule type" value="mRNA"/>
</dbReference>
<dbReference type="SMR" id="B6DD52"/>
<dbReference type="ArachnoServer" id="AS001075">
    <property type="toxin name" value="U16-lycotoxin-Ls1a"/>
</dbReference>
<dbReference type="GO" id="GO:0005576">
    <property type="term" value="C:extracellular region"/>
    <property type="evidence" value="ECO:0007669"/>
    <property type="project" value="UniProtKB-SubCell"/>
</dbReference>
<dbReference type="GO" id="GO:0008200">
    <property type="term" value="F:ion channel inhibitor activity"/>
    <property type="evidence" value="ECO:0007669"/>
    <property type="project" value="InterPro"/>
</dbReference>
<dbReference type="GO" id="GO:0090729">
    <property type="term" value="F:toxin activity"/>
    <property type="evidence" value="ECO:0007669"/>
    <property type="project" value="UniProtKB-KW"/>
</dbReference>
<dbReference type="CDD" id="cd12960">
    <property type="entry name" value="Spider_toxin"/>
    <property type="match status" value="1"/>
</dbReference>
<dbReference type="Gene3D" id="4.10.40.10">
    <property type="match status" value="1"/>
</dbReference>
<dbReference type="InterPro" id="IPR004169">
    <property type="entry name" value="Spidertoxin"/>
</dbReference>
<dbReference type="Pfam" id="PF02819">
    <property type="entry name" value="Toxin_9"/>
    <property type="match status" value="1"/>
</dbReference>
<dbReference type="SUPFAM" id="SSF57059">
    <property type="entry name" value="omega toxin-like"/>
    <property type="match status" value="1"/>
</dbReference>
<accession>B6DD52</accession>